<evidence type="ECO:0000255" key="1">
    <source>
        <dbReference type="HAMAP-Rule" id="MF_01195"/>
    </source>
</evidence>
<gene>
    <name evidence="1" type="primary">nanM</name>
    <name type="ordered locus">YE1943</name>
</gene>
<protein>
    <recommendedName>
        <fullName evidence="1">N-acetylneuraminate epimerase</fullName>
        <ecNumber evidence="1">5.1.3.24</ecNumber>
    </recommendedName>
    <alternativeName>
        <fullName evidence="1">N-acetylneuraminate mutarotase</fullName>
        <shortName evidence="1">Neu5Ac mutarotase</shortName>
    </alternativeName>
    <alternativeName>
        <fullName evidence="1">Sialic acid epimerase</fullName>
    </alternativeName>
</protein>
<name>NANM_YERE8</name>
<reference key="1">
    <citation type="journal article" date="2006" name="PLoS Genet.">
        <title>The complete genome sequence and comparative genome analysis of the high pathogenicity Yersinia enterocolitica strain 8081.</title>
        <authorList>
            <person name="Thomson N.R."/>
            <person name="Howard S."/>
            <person name="Wren B.W."/>
            <person name="Holden M.T.G."/>
            <person name="Crossman L."/>
            <person name="Challis G.L."/>
            <person name="Churcher C."/>
            <person name="Mungall K."/>
            <person name="Brooks K."/>
            <person name="Chillingworth T."/>
            <person name="Feltwell T."/>
            <person name="Abdellah Z."/>
            <person name="Hauser H."/>
            <person name="Jagels K."/>
            <person name="Maddison M."/>
            <person name="Moule S."/>
            <person name="Sanders M."/>
            <person name="Whitehead S."/>
            <person name="Quail M.A."/>
            <person name="Dougan G."/>
            <person name="Parkhill J."/>
            <person name="Prentice M.B."/>
        </authorList>
    </citation>
    <scope>NUCLEOTIDE SEQUENCE [LARGE SCALE GENOMIC DNA]</scope>
    <source>
        <strain>NCTC 13174 / 8081</strain>
    </source>
</reference>
<dbReference type="EC" id="5.1.3.24" evidence="1"/>
<dbReference type="EMBL" id="AM286415">
    <property type="protein sequence ID" value="CAL12022.1"/>
    <property type="molecule type" value="Genomic_DNA"/>
</dbReference>
<dbReference type="RefSeq" id="WP_011816245.1">
    <property type="nucleotide sequence ID" value="NC_008800.1"/>
</dbReference>
<dbReference type="RefSeq" id="YP_001006198.1">
    <property type="nucleotide sequence ID" value="NC_008800.1"/>
</dbReference>
<dbReference type="SMR" id="A1JMV0"/>
<dbReference type="KEGG" id="yen:YE1943"/>
<dbReference type="PATRIC" id="fig|393305.7.peg.2100"/>
<dbReference type="eggNOG" id="COG3055">
    <property type="taxonomic scope" value="Bacteria"/>
</dbReference>
<dbReference type="HOGENOM" id="CLU_061535_0_0_6"/>
<dbReference type="OrthoDB" id="198899at2"/>
<dbReference type="Proteomes" id="UP000000642">
    <property type="component" value="Chromosome"/>
</dbReference>
<dbReference type="GO" id="GO:0042597">
    <property type="term" value="C:periplasmic space"/>
    <property type="evidence" value="ECO:0007669"/>
    <property type="project" value="UniProtKB-SubCell"/>
</dbReference>
<dbReference type="GO" id="GO:0016857">
    <property type="term" value="F:racemase and epimerase activity, acting on carbohydrates and derivatives"/>
    <property type="evidence" value="ECO:0007669"/>
    <property type="project" value="UniProtKB-UniRule"/>
</dbReference>
<dbReference type="Gene3D" id="2.120.10.80">
    <property type="entry name" value="Kelch-type beta propeller"/>
    <property type="match status" value="2"/>
</dbReference>
<dbReference type="HAMAP" id="MF_01195">
    <property type="entry name" value="NanM"/>
    <property type="match status" value="1"/>
</dbReference>
<dbReference type="InterPro" id="IPR015915">
    <property type="entry name" value="Kelch-typ_b-propeller"/>
</dbReference>
<dbReference type="InterPro" id="IPR006652">
    <property type="entry name" value="Kelch_1"/>
</dbReference>
<dbReference type="InterPro" id="IPR056734">
    <property type="entry name" value="NANM"/>
</dbReference>
<dbReference type="InterPro" id="IPR019936">
    <property type="entry name" value="NanM_proteobact"/>
</dbReference>
<dbReference type="NCBIfam" id="TIGR03547">
    <property type="entry name" value="muta_rot_YjhT"/>
    <property type="match status" value="1"/>
</dbReference>
<dbReference type="NCBIfam" id="NF010730">
    <property type="entry name" value="PRK14131.1"/>
    <property type="match status" value="1"/>
</dbReference>
<dbReference type="PANTHER" id="PTHR45632:SF14">
    <property type="entry name" value="KELCH-LIKE PROTEIN 33"/>
    <property type="match status" value="1"/>
</dbReference>
<dbReference type="PANTHER" id="PTHR45632">
    <property type="entry name" value="LD33804P"/>
    <property type="match status" value="1"/>
</dbReference>
<dbReference type="Pfam" id="PF24996">
    <property type="entry name" value="NANM"/>
    <property type="match status" value="1"/>
</dbReference>
<dbReference type="SMART" id="SM00612">
    <property type="entry name" value="Kelch"/>
    <property type="match status" value="1"/>
</dbReference>
<dbReference type="SUPFAM" id="SSF117281">
    <property type="entry name" value="Kelch motif"/>
    <property type="match status" value="1"/>
</dbReference>
<proteinExistence type="inferred from homology"/>
<keyword id="KW-0119">Carbohydrate metabolism</keyword>
<keyword id="KW-0413">Isomerase</keyword>
<keyword id="KW-0880">Kelch repeat</keyword>
<keyword id="KW-0574">Periplasm</keyword>
<keyword id="KW-0677">Repeat</keyword>
<keyword id="KW-0732">Signal</keyword>
<feature type="signal peptide" evidence="1">
    <location>
        <begin position="1"/>
        <end position="35"/>
    </location>
</feature>
<feature type="chain" id="PRO_5000201151" description="N-acetylneuraminate epimerase">
    <location>
        <begin position="36"/>
        <end position="392"/>
    </location>
</feature>
<feature type="repeat" description="Kelch 1">
    <location>
        <begin position="56"/>
        <end position="100"/>
    </location>
</feature>
<feature type="repeat" description="Kelch 2">
    <location>
        <begin position="102"/>
        <end position="155"/>
    </location>
</feature>
<feature type="repeat" description="Kelch 3">
    <location>
        <begin position="157"/>
        <end position="192"/>
    </location>
</feature>
<feature type="repeat" description="Kelch 4">
    <location>
        <begin position="193"/>
        <end position="238"/>
    </location>
</feature>
<feature type="repeat" description="Kelch 5">
    <location>
        <begin position="241"/>
        <end position="290"/>
    </location>
</feature>
<feature type="repeat" description="Kelch 6">
    <location>
        <begin position="312"/>
        <end position="361"/>
    </location>
</feature>
<feature type="repeat" description="Kelch 7">
    <location>
        <begin position="363"/>
        <end position="392"/>
    </location>
</feature>
<feature type="active site" description="Proton acceptor" evidence="1">
    <location>
        <position position="247"/>
    </location>
</feature>
<comment type="function">
    <text evidence="1">Converts alpha-N-acetylneuranimic acid (Neu5Ac) to the beta-anomer, accelerating the equilibrium between the alpha- and beta-anomers. Probably facilitates sialidase-negative bacteria to compete successfully for limited amounts of extracellular Neu5Ac, which is likely taken up in the beta-anomer. In addition, the rapid removal of sialic acid from solution might be advantageous to the bacterium to damp down host responses.</text>
</comment>
<comment type="catalytic activity">
    <reaction evidence="1">
        <text>N-acetyl-alpha-neuraminate = N-acetyl-beta-neuraminate</text>
        <dbReference type="Rhea" id="RHEA:25233"/>
        <dbReference type="ChEBI" id="CHEBI:58705"/>
        <dbReference type="ChEBI" id="CHEBI:58770"/>
        <dbReference type="EC" id="5.1.3.24"/>
    </reaction>
</comment>
<comment type="subunit">
    <text evidence="1">Homodimer.</text>
</comment>
<comment type="subcellular location">
    <subcellularLocation>
        <location evidence="1">Periplasm</location>
    </subcellularLocation>
</comment>
<comment type="similarity">
    <text evidence="1">Belongs to the NanM family.</text>
</comment>
<organism>
    <name type="scientific">Yersinia enterocolitica serotype O:8 / biotype 1B (strain NCTC 13174 / 8081)</name>
    <dbReference type="NCBI Taxonomy" id="393305"/>
    <lineage>
        <taxon>Bacteria</taxon>
        <taxon>Pseudomonadati</taxon>
        <taxon>Pseudomonadota</taxon>
        <taxon>Gammaproteobacteria</taxon>
        <taxon>Enterobacterales</taxon>
        <taxon>Yersiniaceae</taxon>
        <taxon>Yersinia</taxon>
    </lineage>
</organism>
<sequence length="392" mass="42265">MTQIYHQYKKKLSTKVILLSALTLCITFSLPYANAERYPDVPVAFKYGTGARVDNHLYVGLGSAGQSWYRLDTDKASSGWQKIADFPGQPREQAVTVALSGKLYVFGGVGKNSASDTQVRALDDVYQYDPQTNQWQRLATRAPRGLVGTAATTLNGTQALLLGGVNKAIFDGYFTDLAAAGGNETQKNAVVNAYFDQAPADYFYNRDVLMYDPAKNQWKSGGQVPFLGTAGSAITAKKGDLILINGEIKPGLRTAAVWQGKTQGTELKWQQRPDLIGAEKGAVQEGLAGAFAGVSHDVVLVGGGANFPGSWQQFNAGQLYAHQGLKKQWQQPIYALVDNQWQVAGKLPQPLAYGVSIQDKDKVILLGGETSDGVATSAVTQLSWQGGKLHLE</sequence>
<accession>A1JMV0</accession>